<proteinExistence type="inferred from homology"/>
<reference key="1">
    <citation type="journal article" date="2003" name="Genome Res.">
        <title>Comparative genome analysis of Vibrio vulnificus, a marine pathogen.</title>
        <authorList>
            <person name="Chen C.-Y."/>
            <person name="Wu K.-M."/>
            <person name="Chang Y.-C."/>
            <person name="Chang C.-H."/>
            <person name="Tsai H.-C."/>
            <person name="Liao T.-L."/>
            <person name="Liu Y.-M."/>
            <person name="Chen H.-J."/>
            <person name="Shen A.B.-T."/>
            <person name="Li J.-C."/>
            <person name="Su T.-L."/>
            <person name="Shao C.-P."/>
            <person name="Lee C.-T."/>
            <person name="Hor L.-I."/>
            <person name="Tsai S.-F."/>
        </authorList>
    </citation>
    <scope>NUCLEOTIDE SEQUENCE [LARGE SCALE GENOMIC DNA]</scope>
    <source>
        <strain>YJ016</strain>
    </source>
</reference>
<keyword id="KW-0170">Cobalt</keyword>
<keyword id="KW-0963">Cytoplasm</keyword>
<keyword id="KW-0460">Magnesium</keyword>
<keyword id="KW-0479">Metal-binding</keyword>
<keyword id="KW-0520">NAD</keyword>
<keyword id="KW-0521">NADP</keyword>
<keyword id="KW-0560">Oxidoreductase</keyword>
<keyword id="KW-0664">Pyridoxine biosynthesis</keyword>
<keyword id="KW-0862">Zinc</keyword>
<gene>
    <name evidence="1" type="primary">pdxA</name>
    <name type="ordered locus">VV0479</name>
</gene>
<accession>Q7MP85</accession>
<protein>
    <recommendedName>
        <fullName evidence="1">4-hydroxythreonine-4-phosphate dehydrogenase</fullName>
        <ecNumber evidence="1">1.1.1.262</ecNumber>
    </recommendedName>
    <alternativeName>
        <fullName evidence="1">4-(phosphohydroxy)-L-threonine dehydrogenase</fullName>
    </alternativeName>
</protein>
<feature type="chain" id="PRO_0000188836" description="4-hydroxythreonine-4-phosphate dehydrogenase">
    <location>
        <begin position="1"/>
        <end position="328"/>
    </location>
</feature>
<feature type="binding site" evidence="1">
    <location>
        <position position="134"/>
    </location>
    <ligand>
        <name>substrate</name>
    </ligand>
</feature>
<feature type="binding site" evidence="1">
    <location>
        <position position="135"/>
    </location>
    <ligand>
        <name>substrate</name>
    </ligand>
</feature>
<feature type="binding site" evidence="1">
    <location>
        <position position="164"/>
    </location>
    <ligand>
        <name>a divalent metal cation</name>
        <dbReference type="ChEBI" id="CHEBI:60240"/>
        <note>ligand shared between dimeric partners</note>
    </ligand>
</feature>
<feature type="binding site" evidence="1">
    <location>
        <position position="209"/>
    </location>
    <ligand>
        <name>a divalent metal cation</name>
        <dbReference type="ChEBI" id="CHEBI:60240"/>
        <note>ligand shared between dimeric partners</note>
    </ligand>
</feature>
<feature type="binding site" evidence="1">
    <location>
        <position position="265"/>
    </location>
    <ligand>
        <name>a divalent metal cation</name>
        <dbReference type="ChEBI" id="CHEBI:60240"/>
        <note>ligand shared between dimeric partners</note>
    </ligand>
</feature>
<feature type="binding site" evidence="1">
    <location>
        <position position="273"/>
    </location>
    <ligand>
        <name>substrate</name>
    </ligand>
</feature>
<feature type="binding site" evidence="1">
    <location>
        <position position="282"/>
    </location>
    <ligand>
        <name>substrate</name>
    </ligand>
</feature>
<feature type="binding site" evidence="1">
    <location>
        <position position="291"/>
    </location>
    <ligand>
        <name>substrate</name>
    </ligand>
</feature>
<evidence type="ECO:0000255" key="1">
    <source>
        <dbReference type="HAMAP-Rule" id="MF_00536"/>
    </source>
</evidence>
<evidence type="ECO:0000305" key="2"/>
<name>PDXA_VIBVY</name>
<comment type="function">
    <text evidence="1">Catalyzes the NAD(P)-dependent oxidation of 4-(phosphooxy)-L-threonine (HTP) into 2-amino-3-oxo-4-(phosphooxy)butyric acid which spontaneously decarboxylates to form 3-amino-2-oxopropyl phosphate (AHAP).</text>
</comment>
<comment type="catalytic activity">
    <reaction evidence="1">
        <text>4-(phosphooxy)-L-threonine + NAD(+) = 3-amino-2-oxopropyl phosphate + CO2 + NADH</text>
        <dbReference type="Rhea" id="RHEA:32275"/>
        <dbReference type="ChEBI" id="CHEBI:16526"/>
        <dbReference type="ChEBI" id="CHEBI:57279"/>
        <dbReference type="ChEBI" id="CHEBI:57540"/>
        <dbReference type="ChEBI" id="CHEBI:57945"/>
        <dbReference type="ChEBI" id="CHEBI:58452"/>
        <dbReference type="EC" id="1.1.1.262"/>
    </reaction>
</comment>
<comment type="cofactor">
    <cofactor evidence="1">
        <name>Zn(2+)</name>
        <dbReference type="ChEBI" id="CHEBI:29105"/>
    </cofactor>
    <cofactor evidence="1">
        <name>Mg(2+)</name>
        <dbReference type="ChEBI" id="CHEBI:18420"/>
    </cofactor>
    <cofactor evidence="1">
        <name>Co(2+)</name>
        <dbReference type="ChEBI" id="CHEBI:48828"/>
    </cofactor>
    <text evidence="1">Binds 1 divalent metal cation per subunit. Can use ions such as Zn(2+), Mg(2+) or Co(2+).</text>
</comment>
<comment type="pathway">
    <text evidence="1">Cofactor biosynthesis; pyridoxine 5'-phosphate biosynthesis; pyridoxine 5'-phosphate from D-erythrose 4-phosphate: step 4/5.</text>
</comment>
<comment type="subunit">
    <text evidence="1">Homodimer.</text>
</comment>
<comment type="subcellular location">
    <subcellularLocation>
        <location evidence="1">Cytoplasm</location>
    </subcellularLocation>
</comment>
<comment type="miscellaneous">
    <text evidence="1">The active site is located at the dimer interface.</text>
</comment>
<comment type="similarity">
    <text evidence="1">Belongs to the PdxA family.</text>
</comment>
<comment type="sequence caution" evidence="2">
    <conflict type="erroneous initiation">
        <sequence resource="EMBL-CDS" id="BAC93243"/>
    </conflict>
</comment>
<dbReference type="EC" id="1.1.1.262" evidence="1"/>
<dbReference type="EMBL" id="BA000037">
    <property type="protein sequence ID" value="BAC93243.1"/>
    <property type="status" value="ALT_INIT"/>
    <property type="molecule type" value="Genomic_DNA"/>
</dbReference>
<dbReference type="RefSeq" id="WP_043877051.1">
    <property type="nucleotide sequence ID" value="NC_005139.1"/>
</dbReference>
<dbReference type="SMR" id="Q7MP85"/>
<dbReference type="STRING" id="672.VV93_v1c04460"/>
<dbReference type="KEGG" id="vvy:VV0479"/>
<dbReference type="PATRIC" id="fig|196600.6.peg.505"/>
<dbReference type="eggNOG" id="COG1995">
    <property type="taxonomic scope" value="Bacteria"/>
</dbReference>
<dbReference type="HOGENOM" id="CLU_040168_2_0_6"/>
<dbReference type="UniPathway" id="UPA00244">
    <property type="reaction ID" value="UER00312"/>
</dbReference>
<dbReference type="Proteomes" id="UP000002675">
    <property type="component" value="Chromosome I"/>
</dbReference>
<dbReference type="GO" id="GO:0005737">
    <property type="term" value="C:cytoplasm"/>
    <property type="evidence" value="ECO:0007669"/>
    <property type="project" value="UniProtKB-SubCell"/>
</dbReference>
<dbReference type="GO" id="GO:0050570">
    <property type="term" value="F:4-hydroxythreonine-4-phosphate dehydrogenase activity"/>
    <property type="evidence" value="ECO:0007669"/>
    <property type="project" value="UniProtKB-UniRule"/>
</dbReference>
<dbReference type="GO" id="GO:0050897">
    <property type="term" value="F:cobalt ion binding"/>
    <property type="evidence" value="ECO:0007669"/>
    <property type="project" value="UniProtKB-UniRule"/>
</dbReference>
<dbReference type="GO" id="GO:0000287">
    <property type="term" value="F:magnesium ion binding"/>
    <property type="evidence" value="ECO:0007669"/>
    <property type="project" value="UniProtKB-UniRule"/>
</dbReference>
<dbReference type="GO" id="GO:0051287">
    <property type="term" value="F:NAD binding"/>
    <property type="evidence" value="ECO:0007669"/>
    <property type="project" value="InterPro"/>
</dbReference>
<dbReference type="GO" id="GO:0008270">
    <property type="term" value="F:zinc ion binding"/>
    <property type="evidence" value="ECO:0007669"/>
    <property type="project" value="UniProtKB-UniRule"/>
</dbReference>
<dbReference type="GO" id="GO:0042823">
    <property type="term" value="P:pyridoxal phosphate biosynthetic process"/>
    <property type="evidence" value="ECO:0007669"/>
    <property type="project" value="UniProtKB-UniRule"/>
</dbReference>
<dbReference type="GO" id="GO:0008615">
    <property type="term" value="P:pyridoxine biosynthetic process"/>
    <property type="evidence" value="ECO:0007669"/>
    <property type="project" value="UniProtKB-UniRule"/>
</dbReference>
<dbReference type="Gene3D" id="3.40.718.10">
    <property type="entry name" value="Isopropylmalate Dehydrogenase"/>
    <property type="match status" value="1"/>
</dbReference>
<dbReference type="HAMAP" id="MF_00536">
    <property type="entry name" value="PdxA"/>
    <property type="match status" value="1"/>
</dbReference>
<dbReference type="InterPro" id="IPR037510">
    <property type="entry name" value="PdxA"/>
</dbReference>
<dbReference type="InterPro" id="IPR005255">
    <property type="entry name" value="PdxA_fam"/>
</dbReference>
<dbReference type="NCBIfam" id="TIGR00557">
    <property type="entry name" value="pdxA"/>
    <property type="match status" value="1"/>
</dbReference>
<dbReference type="PANTHER" id="PTHR30004">
    <property type="entry name" value="4-HYDROXYTHREONINE-4-PHOSPHATE DEHYDROGENASE"/>
    <property type="match status" value="1"/>
</dbReference>
<dbReference type="PANTHER" id="PTHR30004:SF5">
    <property type="entry name" value="4-HYDROXYTHREONINE-4-PHOSPHATE DEHYDROGENASE"/>
    <property type="match status" value="1"/>
</dbReference>
<dbReference type="Pfam" id="PF04166">
    <property type="entry name" value="PdxA"/>
    <property type="match status" value="1"/>
</dbReference>
<dbReference type="SUPFAM" id="SSF53659">
    <property type="entry name" value="Isocitrate/Isopropylmalate dehydrogenase-like"/>
    <property type="match status" value="1"/>
</dbReference>
<organism>
    <name type="scientific">Vibrio vulnificus (strain YJ016)</name>
    <dbReference type="NCBI Taxonomy" id="196600"/>
    <lineage>
        <taxon>Bacteria</taxon>
        <taxon>Pseudomonadati</taxon>
        <taxon>Pseudomonadota</taxon>
        <taxon>Gammaproteobacteria</taxon>
        <taxon>Vibrionales</taxon>
        <taxon>Vibrionaceae</taxon>
        <taxon>Vibrio</taxon>
    </lineage>
</organism>
<sequence length="328" mass="35506">MVKRLVVTAGEPAGIGPDLVLALSKEHWPHQLVVCADKKMLAQRAEQLGINVTLLDYDASTAPSPQQAGTLVVEHIDMPSTCVAGQLNEENGHYVLKTLERAALGCMKSEFDAIVTGPVHKGVINRAGVAFSGHTEFFAELSNTPLVVMMLATEGLRVALVTTHIPLAYVSKAVTAERLQKIIDILHRDLVEKFAIAEPKIYVCGLNPHAGEDGCLGREEIETITPTLEKIRQEKGIHLLGPLPADTIFNEKYLNDADAVLGMYHDQVLPVLKYKGFGQSVNITLGLPFIRTSVDHGTALDLAGTGQANTGSFRTALQHAIELVEKKQ</sequence>